<accession>Q8LPT9</accession>
<sequence>MSNSIGRNVLHQSLLCSTVFEHQSNRHSSGIPANSLFQAVSINQPAGASAARKSPLSTKFYGTSLNARPKMAMGRHRPVLITPRAVLAVDSASELAGKFNLEGNVELQITVGAPTPGSLTQVNIEISYSSNSLLLHWGAIRDKKEKWVLPSRPPDGTKILKNRALRTPFVSSGSKSLVKLEIDDPAIEAVEFLILDEAQNKWFKNNGANFHVKLPSERSLIQNVSVPEDLVQTQAYLRWERKGKQIYTPEQEKEEYEAARTELLEEIVRGTSVEDLRAKLTNKNDRQEIKESSSHGTKNAIPDDLVQIQSYIRWERAGKPNYSADQQLREFEEARKELQSELEKGISLDEIWKKITKGEIQTKVSDQLKTKKYFRTERIQRKQRDFMQILNKHVAEPTEKKNISVEPKALTPVELFVGATEEQEGDSILNKKIYKLAGKELLVLVHKPGGKTKIHLATDGKEPLILHWALSKKAGEWLAPPPSVLPAGSVLLSGSVETTFTTSSLADLPYQVQSIEIEIEEEGYVGMPSVLQSGGNWIKNKGSDFYVDFSYESKQVQQDFGDGKGTAKALLEKIAGLEIEAQKSFMHRFNIAADLIQEAKEAGELGFAGILVWMRFMATRQLIWNKNYNVKPREISKAQDRLTDLLQNVYISNPEYREIVRMILSTVGRGGEGDVGQRIRDEILVIQRNNNCKGGMMEEWHQKLHNNTSPDDVIICQALIDYIKSDFDISAYWKTLNDNGITKERLLSYDRAIHSEPNFRRDQKDGLLRDLGNYMRTLKAVHSGADLESAITNCLGYRSEGQGFMVGVQINPIPNLPSGFPELLQFVSEHVEDRNVEALLEGLLEARQEIRPLLCKHNDRLKDLLFLDIALESSVRTAIEKGYEELNEAGPEKIMYFVSLILENLALSLDDNEDLIYCLKGWSNALSMSKSKSDNWALFAKSVLDRTRLALAGKADWYQKVLQPSAEYLGTLLSVDKWAVDIFTEEMIRAGSAAALSLLLNRLDPVLRKTASLGSWQVISPVEVFGYVAVVDELLAVQDKSYDQPTILLARRVKGEEEIPHGTVAVLTADMPDVLSHVSVRARNCKVCFATCFDPNILADLQSNEGKMLHLKPTSADIAYSVVEGSELQDSSSANLKEEDGPSSSVALVKKQFAGRYAITSDEFTGELVGAKSRNIAYLKGKVPSWIGIPTSVALPFGVFEKVLSDDINQAVAEKLQILKQKLGEEDHSALREIRETVLQMKAPNQLVQELKTEMKSSGMPWPGDEGEQRWEQAWMAIKKVWASKWNERAFFSTRRVKLDHEYLCMAVLVQEIINADYAFVIHTTNPSSGDSSEIYAEVVKGLGETLVGAYPGRALSFVCKKNDLKSPRVLGYPSKPIGLFIRRSIIFRSDSNGEDLEGYAGAGLYDSVPMDEAEKVVLDYSSDHLITDGHFQQSILSSIARAGCEIEELFGSAQDIEGVVRDGKIYVVQTRPQM</sequence>
<gene>
    <name type="primary">R1</name>
</gene>
<evidence type="ECO:0000250" key="1"/>
<evidence type="ECO:0000269" key="2">
    <source>
    </source>
</evidence>
<evidence type="ECO:0000305" key="3"/>
<comment type="function">
    <text evidence="1">Mediates the incorporation of phosphate into starch-like alpha-glucan, mostly at the C-6 position of glucose units. Acts as an overall regulator of starch mobilization. Required for starch degradation, suggesting that the phosphate content of starch regulates its degradability (By similarity).</text>
</comment>
<comment type="catalytic activity">
    <reaction>
        <text>[(1-&gt;4)-alpha-D-glucosyl](n) + n ATP + n H2O = [(1-&gt;4)-6-phospho-alpha-D-glucosyl](n) + n AMP + n phosphate + 2n H(+)</text>
        <dbReference type="Rhea" id="RHEA:11668"/>
        <dbReference type="Rhea" id="RHEA-COMP:9584"/>
        <dbReference type="Rhea" id="RHEA-COMP:12983"/>
        <dbReference type="ChEBI" id="CHEBI:15377"/>
        <dbReference type="ChEBI" id="CHEBI:15378"/>
        <dbReference type="ChEBI" id="CHEBI:15444"/>
        <dbReference type="ChEBI" id="CHEBI:30616"/>
        <dbReference type="ChEBI" id="CHEBI:43474"/>
        <dbReference type="ChEBI" id="CHEBI:134068"/>
        <dbReference type="ChEBI" id="CHEBI:456215"/>
        <dbReference type="EC" id="2.7.9.4"/>
    </reaction>
</comment>
<comment type="cofactor">
    <cofactor evidence="1">
        <name>Mg(2+)</name>
        <dbReference type="ChEBI" id="CHEBI:18420"/>
    </cofactor>
</comment>
<comment type="subunit">
    <text evidence="1">Homodimer.</text>
</comment>
<comment type="subcellular location">
    <subcellularLocation>
        <location>Plastid</location>
        <location>Chloroplast</location>
    </subcellularLocation>
    <text>Starch granules.</text>
</comment>
<comment type="induction">
    <text evidence="2">Down-regulated upon carbohydrate starvation.</text>
</comment>
<comment type="domain">
    <text evidence="1">The N-terminal domain contains the alpha-glucan binding site, the central domain the pyrophosphate/phosphate carrier histidine, and the C-terminal domain the ATP binding site.</text>
</comment>
<comment type="miscellaneous">
    <text evidence="1">The reaction takes place in three steps, mediated by a phosphocarrier histidine residue located on the surface of the central domain. The two first partial reactions are catalyzed at an active site located on the C-terminal domain, and the third partial reaction is catalyzed at an active site located on the N-terminal domain. For catalytic turnover, the central domain swivels from the concave surface of the C-terminal domain to that of the N-terminal domain (By similarity).</text>
</comment>
<comment type="similarity">
    <text evidence="3">Belongs to the PEP-utilizing enzyme family.</text>
</comment>
<protein>
    <recommendedName>
        <fullName>Alpha-glucan water dikinase, chloroplastic</fullName>
        <ecNumber>2.7.9.4</ecNumber>
    </recommendedName>
    <alternativeName>
        <fullName>Starch-related protein R1</fullName>
    </alternativeName>
</protein>
<feature type="transit peptide" description="Chloroplast" evidence="1">
    <location>
        <begin position="1"/>
        <end position="85"/>
    </location>
</feature>
<feature type="chain" id="PRO_0000023566" description="Alpha-glucan water dikinase, chloroplastic">
    <location>
        <begin position="86"/>
        <end position="1475"/>
    </location>
</feature>
<feature type="active site" description="Tele-phosphohistidine intermediate" evidence="1">
    <location>
        <position position="1077"/>
    </location>
</feature>
<reference key="1">
    <citation type="journal article" date="2003" name="Planta">
        <title>Effects of carbohydrate starvation on gene expression in citrus root.</title>
        <authorList>
            <person name="Li C.Y."/>
            <person name="Weiss D."/>
            <person name="Goldschmidt E.E."/>
        </authorList>
    </citation>
    <scope>NUCLEOTIDE SEQUENCE [MRNA]</scope>
    <scope>INDUCTION</scope>
</reference>
<organism>
    <name type="scientific">Citrus reticulata</name>
    <name type="common">Tangerine</name>
    <dbReference type="NCBI Taxonomy" id="85571"/>
    <lineage>
        <taxon>Eukaryota</taxon>
        <taxon>Viridiplantae</taxon>
        <taxon>Streptophyta</taxon>
        <taxon>Embryophyta</taxon>
        <taxon>Tracheophyta</taxon>
        <taxon>Spermatophyta</taxon>
        <taxon>Magnoliopsida</taxon>
        <taxon>eudicotyledons</taxon>
        <taxon>Gunneridae</taxon>
        <taxon>Pentapetalae</taxon>
        <taxon>rosids</taxon>
        <taxon>malvids</taxon>
        <taxon>Sapindales</taxon>
        <taxon>Rutaceae</taxon>
        <taxon>Aurantioideae</taxon>
        <taxon>Citrus</taxon>
    </lineage>
</organism>
<dbReference type="EC" id="2.7.9.4"/>
<dbReference type="EMBL" id="AY094062">
    <property type="protein sequence ID" value="AAM18228.1"/>
    <property type="molecule type" value="mRNA"/>
</dbReference>
<dbReference type="CAZy" id="CBM45">
    <property type="family name" value="Carbohydrate-Binding Module Family 45"/>
</dbReference>
<dbReference type="GO" id="GO:0009507">
    <property type="term" value="C:chloroplast"/>
    <property type="evidence" value="ECO:0007669"/>
    <property type="project" value="UniProtKB-SubCell"/>
</dbReference>
<dbReference type="GO" id="GO:0050521">
    <property type="term" value="F:alpha-glucan, water dikinase activity"/>
    <property type="evidence" value="ECO:0007669"/>
    <property type="project" value="UniProtKB-EC"/>
</dbReference>
<dbReference type="GO" id="GO:0005524">
    <property type="term" value="F:ATP binding"/>
    <property type="evidence" value="ECO:0007669"/>
    <property type="project" value="UniProtKB-KW"/>
</dbReference>
<dbReference type="GO" id="GO:0046872">
    <property type="term" value="F:metal ion binding"/>
    <property type="evidence" value="ECO:0007669"/>
    <property type="project" value="UniProtKB-KW"/>
</dbReference>
<dbReference type="Gene3D" id="3.30.1490.20">
    <property type="entry name" value="ATP-grasp fold, A domain"/>
    <property type="match status" value="2"/>
</dbReference>
<dbReference type="Gene3D" id="3.30.470.20">
    <property type="entry name" value="ATP-grasp fold, B domain"/>
    <property type="match status" value="1"/>
</dbReference>
<dbReference type="InterPro" id="IPR013815">
    <property type="entry name" value="ATP_grasp_subdomain_1"/>
</dbReference>
<dbReference type="InterPro" id="IPR055495">
    <property type="entry name" value="CWD_DUF7067"/>
</dbReference>
<dbReference type="InterPro" id="IPR056301">
    <property type="entry name" value="GWD-like_N_Ig"/>
</dbReference>
<dbReference type="InterPro" id="IPR054481">
    <property type="entry name" value="GWD1_pHisD"/>
</dbReference>
<dbReference type="InterPro" id="IPR002192">
    <property type="entry name" value="PPDK_AMP/ATP-bd"/>
</dbReference>
<dbReference type="PANTHER" id="PTHR46999:SF1">
    <property type="entry name" value="ALPHA-GLUCAN WATER DIKINASE 1, CHLOROPLASTIC"/>
    <property type="match status" value="1"/>
</dbReference>
<dbReference type="PANTHER" id="PTHR46999">
    <property type="entry name" value="ALPHA-GLUCAN WATER DIKINASE 1, CHLOROPLASTIC-RELATED"/>
    <property type="match status" value="1"/>
</dbReference>
<dbReference type="Pfam" id="PF23229">
    <property type="entry name" value="DUF7067"/>
    <property type="match status" value="2"/>
</dbReference>
<dbReference type="Pfam" id="PF22973">
    <property type="entry name" value="GWD1_pHisD"/>
    <property type="match status" value="1"/>
</dbReference>
<dbReference type="Pfam" id="PF23166">
    <property type="entry name" value="Ig_N_CWD1"/>
    <property type="match status" value="2"/>
</dbReference>
<dbReference type="Pfam" id="PF01326">
    <property type="entry name" value="PPDK_N"/>
    <property type="match status" value="1"/>
</dbReference>
<dbReference type="SUPFAM" id="SSF56059">
    <property type="entry name" value="Glutathione synthetase ATP-binding domain-like"/>
    <property type="match status" value="1"/>
</dbReference>
<proteinExistence type="evidence at transcript level"/>
<name>GWD1_CITRE</name>
<keyword id="KW-0067">ATP-binding</keyword>
<keyword id="KW-0119">Carbohydrate metabolism</keyword>
<keyword id="KW-0150">Chloroplast</keyword>
<keyword id="KW-0418">Kinase</keyword>
<keyword id="KW-0460">Magnesium</keyword>
<keyword id="KW-0479">Metal-binding</keyword>
<keyword id="KW-0547">Nucleotide-binding</keyword>
<keyword id="KW-0934">Plastid</keyword>
<keyword id="KW-0808">Transferase</keyword>
<keyword id="KW-0809">Transit peptide</keyword>